<evidence type="ECO:0000255" key="1">
    <source>
        <dbReference type="HAMAP-Rule" id="MF_00378"/>
    </source>
</evidence>
<organism>
    <name type="scientific">Vibrio cholerae serotype O1 (strain M66-2)</name>
    <dbReference type="NCBI Taxonomy" id="579112"/>
    <lineage>
        <taxon>Bacteria</taxon>
        <taxon>Pseudomonadati</taxon>
        <taxon>Pseudomonadota</taxon>
        <taxon>Gammaproteobacteria</taxon>
        <taxon>Vibrionales</taxon>
        <taxon>Vibrionaceae</taxon>
        <taxon>Vibrio</taxon>
    </lineage>
</organism>
<gene>
    <name evidence="1" type="primary">xseA</name>
    <name type="ordered locus">VCM66_0724</name>
</gene>
<feature type="chain" id="PRO_1000200688" description="Exodeoxyribonuclease 7 large subunit">
    <location>
        <begin position="1"/>
        <end position="446"/>
    </location>
</feature>
<sequence length="446" mass="50543">MSSSLANRNIYTVSRLNSEVRLLLENEMGIVWLVGEISNFSAPVSGHWYLTLKDSQAQVKCAMFKGNNRLVNFKPQNGQQVLVKARLSLYEPRGDYQIILESMQPEGDGRLQQQFEQLKMQLAAEGLFAQTRKKPLPENPRCVGIITSRTGAALHDILHVLKRRDPNLPVVIYPTLVQGEEAAIQIAQAIGRANTRAECDVLIVGRGGGSLEDLWCFNHEIVARTIAASEIPIISAVGHEIDVTIADFVADVRAPTPSAAAELVSRDHRHKQQALHQWQAKLASTMRHYLAQQETQFARLQHKLDKQHPQARLERQQQQLDELSLRLEQKMQQRLATQQQRWDRLSHKIELHSPIHLIRQQRFNLIQQEQRINQSIQRYLIQSRHQLALLSEKLDAVSPLATLARGYSVTRTTQGELVRQSAQVKPGDTLVTQLMDGEILSTVNSR</sequence>
<proteinExistence type="inferred from homology"/>
<keyword id="KW-0963">Cytoplasm</keyword>
<keyword id="KW-0269">Exonuclease</keyword>
<keyword id="KW-0378">Hydrolase</keyword>
<keyword id="KW-0540">Nuclease</keyword>
<reference key="1">
    <citation type="journal article" date="2008" name="PLoS ONE">
        <title>A recalibrated molecular clock and independent origins for the cholera pandemic clones.</title>
        <authorList>
            <person name="Feng L."/>
            <person name="Reeves P.R."/>
            <person name="Lan R."/>
            <person name="Ren Y."/>
            <person name="Gao C."/>
            <person name="Zhou Z."/>
            <person name="Ren Y."/>
            <person name="Cheng J."/>
            <person name="Wang W."/>
            <person name="Wang J."/>
            <person name="Qian W."/>
            <person name="Li D."/>
            <person name="Wang L."/>
        </authorList>
    </citation>
    <scope>NUCLEOTIDE SEQUENCE [LARGE SCALE GENOMIC DNA]</scope>
    <source>
        <strain>M66-2</strain>
    </source>
</reference>
<dbReference type="EC" id="3.1.11.6" evidence="1"/>
<dbReference type="EMBL" id="CP001233">
    <property type="protein sequence ID" value="ACP05045.1"/>
    <property type="molecule type" value="Genomic_DNA"/>
</dbReference>
<dbReference type="RefSeq" id="WP_000099131.1">
    <property type="nucleotide sequence ID" value="NC_012578.1"/>
</dbReference>
<dbReference type="SMR" id="C3LT19"/>
<dbReference type="KEGG" id="vcm:VCM66_0724"/>
<dbReference type="HOGENOM" id="CLU_023625_3_1_6"/>
<dbReference type="Proteomes" id="UP000001217">
    <property type="component" value="Chromosome I"/>
</dbReference>
<dbReference type="GO" id="GO:0005737">
    <property type="term" value="C:cytoplasm"/>
    <property type="evidence" value="ECO:0007669"/>
    <property type="project" value="UniProtKB-SubCell"/>
</dbReference>
<dbReference type="GO" id="GO:0009318">
    <property type="term" value="C:exodeoxyribonuclease VII complex"/>
    <property type="evidence" value="ECO:0007669"/>
    <property type="project" value="InterPro"/>
</dbReference>
<dbReference type="GO" id="GO:0008855">
    <property type="term" value="F:exodeoxyribonuclease VII activity"/>
    <property type="evidence" value="ECO:0007669"/>
    <property type="project" value="UniProtKB-UniRule"/>
</dbReference>
<dbReference type="GO" id="GO:0003676">
    <property type="term" value="F:nucleic acid binding"/>
    <property type="evidence" value="ECO:0007669"/>
    <property type="project" value="InterPro"/>
</dbReference>
<dbReference type="GO" id="GO:0006308">
    <property type="term" value="P:DNA catabolic process"/>
    <property type="evidence" value="ECO:0007669"/>
    <property type="project" value="UniProtKB-UniRule"/>
</dbReference>
<dbReference type="CDD" id="cd04489">
    <property type="entry name" value="ExoVII_LU_OBF"/>
    <property type="match status" value="1"/>
</dbReference>
<dbReference type="HAMAP" id="MF_00378">
    <property type="entry name" value="Exonuc_7_L"/>
    <property type="match status" value="1"/>
</dbReference>
<dbReference type="InterPro" id="IPR003753">
    <property type="entry name" value="Exonuc_VII_L"/>
</dbReference>
<dbReference type="InterPro" id="IPR020579">
    <property type="entry name" value="Exonuc_VII_lsu_C"/>
</dbReference>
<dbReference type="InterPro" id="IPR025824">
    <property type="entry name" value="OB-fold_nuc-bd_dom"/>
</dbReference>
<dbReference type="NCBIfam" id="TIGR00237">
    <property type="entry name" value="xseA"/>
    <property type="match status" value="1"/>
</dbReference>
<dbReference type="PANTHER" id="PTHR30008">
    <property type="entry name" value="EXODEOXYRIBONUCLEASE 7 LARGE SUBUNIT"/>
    <property type="match status" value="1"/>
</dbReference>
<dbReference type="PANTHER" id="PTHR30008:SF0">
    <property type="entry name" value="EXODEOXYRIBONUCLEASE 7 LARGE SUBUNIT"/>
    <property type="match status" value="1"/>
</dbReference>
<dbReference type="Pfam" id="PF02601">
    <property type="entry name" value="Exonuc_VII_L"/>
    <property type="match status" value="1"/>
</dbReference>
<dbReference type="Pfam" id="PF13742">
    <property type="entry name" value="tRNA_anti_2"/>
    <property type="match status" value="1"/>
</dbReference>
<accession>C3LT19</accession>
<protein>
    <recommendedName>
        <fullName evidence="1">Exodeoxyribonuclease 7 large subunit</fullName>
        <ecNumber evidence="1">3.1.11.6</ecNumber>
    </recommendedName>
    <alternativeName>
        <fullName evidence="1">Exodeoxyribonuclease VII large subunit</fullName>
        <shortName evidence="1">Exonuclease VII large subunit</shortName>
    </alternativeName>
</protein>
<name>EX7L_VIBCM</name>
<comment type="function">
    <text evidence="1">Bidirectionally degrades single-stranded DNA into large acid-insoluble oligonucleotides, which are then degraded further into small acid-soluble oligonucleotides.</text>
</comment>
<comment type="catalytic activity">
    <reaction evidence="1">
        <text>Exonucleolytic cleavage in either 5'- to 3'- or 3'- to 5'-direction to yield nucleoside 5'-phosphates.</text>
        <dbReference type="EC" id="3.1.11.6"/>
    </reaction>
</comment>
<comment type="subunit">
    <text evidence="1">Heterooligomer composed of large and small subunits.</text>
</comment>
<comment type="subcellular location">
    <subcellularLocation>
        <location evidence="1">Cytoplasm</location>
    </subcellularLocation>
</comment>
<comment type="similarity">
    <text evidence="1">Belongs to the XseA family.</text>
</comment>